<feature type="chain" id="PRO_0000119938" description="F-box only protein 40">
    <location>
        <begin position="1"/>
        <end position="709"/>
    </location>
</feature>
<feature type="domain" description="F-box" evidence="2">
    <location>
        <begin position="570"/>
        <end position="624"/>
    </location>
</feature>
<feature type="zinc finger region" description="TRAF-type" evidence="3">
    <location>
        <begin position="53"/>
        <end position="112"/>
    </location>
</feature>
<feature type="region of interest" description="Disordered" evidence="4">
    <location>
        <begin position="232"/>
        <end position="280"/>
    </location>
</feature>
<feature type="compositionally biased region" description="Basic and acidic residues" evidence="4">
    <location>
        <begin position="240"/>
        <end position="250"/>
    </location>
</feature>
<feature type="compositionally biased region" description="Basic and acidic residues" evidence="4">
    <location>
        <begin position="262"/>
        <end position="277"/>
    </location>
</feature>
<feature type="sequence variant" id="VAR_030005" description="In dbSNP:rs4676684.">
    <original>V</original>
    <variation>A</variation>
    <location>
        <position position="87"/>
    </location>
</feature>
<feature type="sequence conflict" description="In Ref. 1; AAF17085." evidence="6" ref="1">
    <original>T</original>
    <variation>A</variation>
    <location>
        <position position="45"/>
    </location>
</feature>
<feature type="sequence conflict" description="In Ref. 1; AAF17085." evidence="6" ref="1">
    <original>L</original>
    <variation>P</variation>
    <location>
        <position position="146"/>
    </location>
</feature>
<feature type="sequence conflict" description="In Ref. 1; AAF17085." evidence="6" ref="1">
    <original>E</original>
    <variation>G</variation>
    <location>
        <position position="388"/>
    </location>
</feature>
<comment type="function">
    <text evidence="1">Probable substrate-recognition component of the SCF (SKP1-CUL1-F-box protein)-type E3 ubiquitin ligase complex that may function in myogenesis.</text>
</comment>
<comment type="subunit">
    <text evidence="1">Directly interacts with SKP1 and CUL1.</text>
</comment>
<comment type="subcellular location">
    <subcellularLocation>
        <location evidence="1">Cytoplasm</location>
    </subcellularLocation>
</comment>
<comment type="tissue specificity">
    <text evidence="5">Expressed only in heart and skeletal muscle.</text>
</comment>
<comment type="miscellaneous">
    <text>The expression decreases in the dystrophic muscle of Limb-girdle muscular dystrophy (LGMD) patient.</text>
</comment>
<comment type="sequence caution" evidence="6">
    <conflict type="erroneous initiation">
        <sequence resource="EMBL-CDS" id="BAA86509"/>
    </conflict>
    <text>Extended N-terminus.</text>
</comment>
<protein>
    <recommendedName>
        <fullName>F-box only protein 40</fullName>
    </recommendedName>
    <alternativeName>
        <fullName>Muscle disease-related protein</fullName>
    </alternativeName>
</protein>
<keyword id="KW-0963">Cytoplasm</keyword>
<keyword id="KW-0479">Metal-binding</keyword>
<keyword id="KW-1267">Proteomics identification</keyword>
<keyword id="KW-1185">Reference proteome</keyword>
<keyword id="KW-0833">Ubl conjugation pathway</keyword>
<keyword id="KW-0862">Zinc</keyword>
<keyword id="KW-0863">Zinc-finger</keyword>
<sequence length="709" mass="79782">MGKARRSPPGHHRHCEGCFNRHCHIPVEPNTSCLVISCHLLCGATFHMCKEAEHQLLCPLEQVPCLNSEYGCPLSMSRHKLAKHLQVCPASVVCCSMEWNRWPNVDSETTLHENIMKETPSEECLDTALALQDQKVLFRSLKMVELFPETREATEEEPTMNGETSVEEMGGAVGGVDIGLVPHGLSATNGEMAELSQEEREVLAKTKEGMDLVKFGQWENIFSKEHAASALTNSSASCESKNKNDSEKEQISSGHNMVEGEGAPKKKEPQENQKQQDVRTAMETTGLAPWQDGVLERLKTAVDAKDYNMYLVHNGRMLIHFGQMPACTPKERDFVYGKLEAQEVKTVYTFKVPVSYCGKRARLGDAMLSCKPSEHKAVDTSDLGITVEDLPKSDLIKTTLQCALERELKGHVISESRSIDGLFMDFATQTYNFEPEQFSSGTVLADLTAATPGGLHVELHSECVTRRHNKSSSAFTFTCNKFFRRDEFPLHFKNVHTDIQSCLNGWFQHRCPLAYLGCTFVQNHFRPPGQKAKVIYSQELKTFAIKPEVAPELSEGRKNNHLLGHGGKSQNSLTSLPLEILKYIAGFLDSVSLAQLSQVSVLMRNICATLLQERGMVLLQWKKKRYSHGGTSWRVHREIWQFSSLFSKIKSWEFNEVTSMSEHLKSCPFNIVEHKTDPILLTSMCQPREQARESLVSTFRIRPRGRYVS</sequence>
<evidence type="ECO:0000250" key="1"/>
<evidence type="ECO:0000255" key="2">
    <source>
        <dbReference type="PROSITE-ProRule" id="PRU00080"/>
    </source>
</evidence>
<evidence type="ECO:0000255" key="3">
    <source>
        <dbReference type="PROSITE-ProRule" id="PRU00207"/>
    </source>
</evidence>
<evidence type="ECO:0000256" key="4">
    <source>
        <dbReference type="SAM" id="MobiDB-lite"/>
    </source>
</evidence>
<evidence type="ECO:0000269" key="5">
    <source>
    </source>
</evidence>
<evidence type="ECO:0000305" key="6"/>
<dbReference type="EMBL" id="AF204674">
    <property type="protein sequence ID" value="AAF17085.1"/>
    <property type="molecule type" value="mRNA"/>
</dbReference>
<dbReference type="EMBL" id="AB033021">
    <property type="protein sequence ID" value="BAA86509.1"/>
    <property type="status" value="ALT_INIT"/>
    <property type="molecule type" value="mRNA"/>
</dbReference>
<dbReference type="EMBL" id="AK314400">
    <property type="protein sequence ID" value="BAG37024.1"/>
    <property type="molecule type" value="mRNA"/>
</dbReference>
<dbReference type="EMBL" id="AC063920">
    <property type="status" value="NOT_ANNOTATED_CDS"/>
    <property type="molecule type" value="Genomic_DNA"/>
</dbReference>
<dbReference type="EMBL" id="CH471052">
    <property type="protein sequence ID" value="EAW79508.1"/>
    <property type="molecule type" value="Genomic_DNA"/>
</dbReference>
<dbReference type="EMBL" id="BC109275">
    <property type="protein sequence ID" value="AAI09276.1"/>
    <property type="molecule type" value="mRNA"/>
</dbReference>
<dbReference type="EMBL" id="BC109276">
    <property type="protein sequence ID" value="AAI09277.1"/>
    <property type="molecule type" value="mRNA"/>
</dbReference>
<dbReference type="CCDS" id="CCDS33835.1"/>
<dbReference type="RefSeq" id="NP_057382.2">
    <property type="nucleotide sequence ID" value="NM_016298.4"/>
</dbReference>
<dbReference type="SMR" id="Q9UH90"/>
<dbReference type="BioGRID" id="119698">
    <property type="interactions" value="15"/>
</dbReference>
<dbReference type="ComplexPortal" id="CPX-7981">
    <property type="entry name" value="SCF E3 ubiquitin ligase complex, FBXO40 variant"/>
</dbReference>
<dbReference type="FunCoup" id="Q9UH90">
    <property type="interactions" value="108"/>
</dbReference>
<dbReference type="IntAct" id="Q9UH90">
    <property type="interactions" value="12"/>
</dbReference>
<dbReference type="STRING" id="9606.ENSP00000337510"/>
<dbReference type="iPTMnet" id="Q9UH90"/>
<dbReference type="PhosphoSitePlus" id="Q9UH90"/>
<dbReference type="BioMuta" id="FBXO40"/>
<dbReference type="DMDM" id="124012094"/>
<dbReference type="MassIVE" id="Q9UH90"/>
<dbReference type="PaxDb" id="9606-ENSP00000337510"/>
<dbReference type="PeptideAtlas" id="Q9UH90"/>
<dbReference type="ProteomicsDB" id="84285"/>
<dbReference type="Antibodypedia" id="1237">
    <property type="antibodies" value="117 antibodies from 19 providers"/>
</dbReference>
<dbReference type="DNASU" id="51725"/>
<dbReference type="Ensembl" id="ENST00000338040.6">
    <property type="protein sequence ID" value="ENSP00000337510.4"/>
    <property type="gene ID" value="ENSG00000163833.8"/>
</dbReference>
<dbReference type="GeneID" id="51725"/>
<dbReference type="KEGG" id="hsa:51725"/>
<dbReference type="MANE-Select" id="ENST00000338040.6">
    <property type="protein sequence ID" value="ENSP00000337510.4"/>
    <property type="RefSeq nucleotide sequence ID" value="NM_016298.4"/>
    <property type="RefSeq protein sequence ID" value="NP_057382.2"/>
</dbReference>
<dbReference type="UCSC" id="uc003eeg.3">
    <property type="organism name" value="human"/>
</dbReference>
<dbReference type="AGR" id="HGNC:29816"/>
<dbReference type="CTD" id="51725"/>
<dbReference type="DisGeNET" id="51725"/>
<dbReference type="GeneCards" id="FBXO40"/>
<dbReference type="HGNC" id="HGNC:29816">
    <property type="gene designation" value="FBXO40"/>
</dbReference>
<dbReference type="HPA" id="ENSG00000163833">
    <property type="expression patterns" value="Group enriched (heart muscle, skeletal muscle, tongue)"/>
</dbReference>
<dbReference type="MalaCards" id="FBXO40"/>
<dbReference type="MIM" id="609107">
    <property type="type" value="gene"/>
</dbReference>
<dbReference type="neXtProt" id="NX_Q9UH90"/>
<dbReference type="OpenTargets" id="ENSG00000163833"/>
<dbReference type="PharmGKB" id="PA134971542"/>
<dbReference type="VEuPathDB" id="HostDB:ENSG00000163833"/>
<dbReference type="eggNOG" id="ENOG502QVHX">
    <property type="taxonomic scope" value="Eukaryota"/>
</dbReference>
<dbReference type="GeneTree" id="ENSGT00950000183204"/>
<dbReference type="HOGENOM" id="CLU_013357_0_0_1"/>
<dbReference type="InParanoid" id="Q9UH90"/>
<dbReference type="OMA" id="RKKIWQF"/>
<dbReference type="OrthoDB" id="5918172at2759"/>
<dbReference type="PAN-GO" id="Q9UH90">
    <property type="GO annotations" value="1 GO annotation based on evolutionary models"/>
</dbReference>
<dbReference type="PhylomeDB" id="Q9UH90"/>
<dbReference type="TreeFam" id="TF343227"/>
<dbReference type="PathwayCommons" id="Q9UH90"/>
<dbReference type="Reactome" id="R-HSA-8951664">
    <property type="pathway name" value="Neddylation"/>
</dbReference>
<dbReference type="Reactome" id="R-HSA-983168">
    <property type="pathway name" value="Antigen processing: Ubiquitination &amp; Proteasome degradation"/>
</dbReference>
<dbReference type="SignaLink" id="Q9UH90"/>
<dbReference type="BioGRID-ORCS" id="51725">
    <property type="hits" value="11 hits in 1191 CRISPR screens"/>
</dbReference>
<dbReference type="GenomeRNAi" id="51725"/>
<dbReference type="Pharos" id="Q9UH90">
    <property type="development level" value="Tbio"/>
</dbReference>
<dbReference type="PRO" id="PR:Q9UH90"/>
<dbReference type="Proteomes" id="UP000005640">
    <property type="component" value="Chromosome 3"/>
</dbReference>
<dbReference type="RNAct" id="Q9UH90">
    <property type="molecule type" value="protein"/>
</dbReference>
<dbReference type="Bgee" id="ENSG00000163833">
    <property type="expression patterns" value="Expressed in gluteal muscle and 92 other cell types or tissues"/>
</dbReference>
<dbReference type="GO" id="GO:0005737">
    <property type="term" value="C:cytoplasm"/>
    <property type="evidence" value="ECO:0000250"/>
    <property type="project" value="UniProtKB"/>
</dbReference>
<dbReference type="GO" id="GO:0005829">
    <property type="term" value="C:cytosol"/>
    <property type="evidence" value="ECO:0000304"/>
    <property type="project" value="Reactome"/>
</dbReference>
<dbReference type="GO" id="GO:0061630">
    <property type="term" value="F:ubiquitin protein ligase activity"/>
    <property type="evidence" value="ECO:0007669"/>
    <property type="project" value="InterPro"/>
</dbReference>
<dbReference type="GO" id="GO:0008270">
    <property type="term" value="F:zinc ion binding"/>
    <property type="evidence" value="ECO:0007669"/>
    <property type="project" value="UniProtKB-KW"/>
</dbReference>
<dbReference type="GO" id="GO:0042692">
    <property type="term" value="P:muscle cell differentiation"/>
    <property type="evidence" value="ECO:0000250"/>
    <property type="project" value="UniProtKB"/>
</dbReference>
<dbReference type="CDD" id="cd22175">
    <property type="entry name" value="F-box_FBXO40"/>
    <property type="match status" value="1"/>
</dbReference>
<dbReference type="Gene3D" id="3.30.40.150">
    <property type="entry name" value="TRAF-like zinc-finger, N-terminal subdomain"/>
    <property type="match status" value="1"/>
</dbReference>
<dbReference type="Gene3D" id="3.30.40.10">
    <property type="entry name" value="Zinc/RING finger domain, C3HC4 (zinc finger)"/>
    <property type="match status" value="1"/>
</dbReference>
<dbReference type="InterPro" id="IPR036047">
    <property type="entry name" value="F-box-like_dom_sf"/>
</dbReference>
<dbReference type="InterPro" id="IPR001810">
    <property type="entry name" value="F-box_dom"/>
</dbReference>
<dbReference type="InterPro" id="IPR031890">
    <property type="entry name" value="Fbxo30/Fbxo40"/>
</dbReference>
<dbReference type="InterPro" id="IPR013083">
    <property type="entry name" value="Znf_RING/FYVE/PHD"/>
</dbReference>
<dbReference type="InterPro" id="IPR001293">
    <property type="entry name" value="Znf_TRAF"/>
</dbReference>
<dbReference type="InterPro" id="IPR043013">
    <property type="entry name" value="Znf_TRAF_N"/>
</dbReference>
<dbReference type="PANTHER" id="PTHR15933:SF1">
    <property type="entry name" value="F-BOX ONLY PROTEIN 40"/>
    <property type="match status" value="1"/>
</dbReference>
<dbReference type="PANTHER" id="PTHR15933">
    <property type="entry name" value="PROTEIN CBG16327"/>
    <property type="match status" value="1"/>
</dbReference>
<dbReference type="Pfam" id="PF15966">
    <property type="entry name" value="F-box_4"/>
    <property type="match status" value="1"/>
</dbReference>
<dbReference type="Pfam" id="PF15965">
    <property type="entry name" value="zf-TRAF_2"/>
    <property type="match status" value="1"/>
</dbReference>
<dbReference type="SUPFAM" id="SSF81383">
    <property type="entry name" value="F-box domain"/>
    <property type="match status" value="1"/>
</dbReference>
<dbReference type="SUPFAM" id="SSF49599">
    <property type="entry name" value="TRAF domain-like"/>
    <property type="match status" value="1"/>
</dbReference>
<dbReference type="PROSITE" id="PS50181">
    <property type="entry name" value="FBOX"/>
    <property type="match status" value="1"/>
</dbReference>
<dbReference type="PROSITE" id="PS50145">
    <property type="entry name" value="ZF_TRAF"/>
    <property type="match status" value="1"/>
</dbReference>
<organism>
    <name type="scientific">Homo sapiens</name>
    <name type="common">Human</name>
    <dbReference type="NCBI Taxonomy" id="9606"/>
    <lineage>
        <taxon>Eukaryota</taxon>
        <taxon>Metazoa</taxon>
        <taxon>Chordata</taxon>
        <taxon>Craniata</taxon>
        <taxon>Vertebrata</taxon>
        <taxon>Euteleostomi</taxon>
        <taxon>Mammalia</taxon>
        <taxon>Eutheria</taxon>
        <taxon>Euarchontoglires</taxon>
        <taxon>Primates</taxon>
        <taxon>Haplorrhini</taxon>
        <taxon>Catarrhini</taxon>
        <taxon>Hominidae</taxon>
        <taxon>Homo</taxon>
    </lineage>
</organism>
<reference key="1">
    <citation type="submission" date="1999-11" db="EMBL/GenBank/DDBJ databases">
        <title>Cloning of a novel human gene related to muscle disease.</title>
        <authorList>
            <person name="Zhou Z.G."/>
            <person name="Wu Y.Q."/>
            <person name="Ren H.M."/>
            <person name="Lu C.Z."/>
        </authorList>
    </citation>
    <scope>NUCLEOTIDE SEQUENCE [MRNA]</scope>
    <source>
        <tissue>Muscle</tissue>
    </source>
</reference>
<reference key="2">
    <citation type="journal article" date="1999" name="DNA Res.">
        <title>Prediction of the coding sequences of unidentified human genes. XV. The complete sequences of 100 new cDNA clones from brain which code for large proteins in vitro.</title>
        <authorList>
            <person name="Nagase T."/>
            <person name="Ishikawa K."/>
            <person name="Kikuno R."/>
            <person name="Hirosawa M."/>
            <person name="Nomura N."/>
            <person name="Ohara O."/>
        </authorList>
    </citation>
    <scope>NUCLEOTIDE SEQUENCE [LARGE SCALE MRNA]</scope>
    <source>
        <tissue>Brain</tissue>
    </source>
</reference>
<reference key="3">
    <citation type="journal article" date="2004" name="Nat. Genet.">
        <title>Complete sequencing and characterization of 21,243 full-length human cDNAs.</title>
        <authorList>
            <person name="Ota T."/>
            <person name="Suzuki Y."/>
            <person name="Nishikawa T."/>
            <person name="Otsuki T."/>
            <person name="Sugiyama T."/>
            <person name="Irie R."/>
            <person name="Wakamatsu A."/>
            <person name="Hayashi K."/>
            <person name="Sato H."/>
            <person name="Nagai K."/>
            <person name="Kimura K."/>
            <person name="Makita H."/>
            <person name="Sekine M."/>
            <person name="Obayashi M."/>
            <person name="Nishi T."/>
            <person name="Shibahara T."/>
            <person name="Tanaka T."/>
            <person name="Ishii S."/>
            <person name="Yamamoto J."/>
            <person name="Saito K."/>
            <person name="Kawai Y."/>
            <person name="Isono Y."/>
            <person name="Nakamura Y."/>
            <person name="Nagahari K."/>
            <person name="Murakami K."/>
            <person name="Yasuda T."/>
            <person name="Iwayanagi T."/>
            <person name="Wagatsuma M."/>
            <person name="Shiratori A."/>
            <person name="Sudo H."/>
            <person name="Hosoiri T."/>
            <person name="Kaku Y."/>
            <person name="Kodaira H."/>
            <person name="Kondo H."/>
            <person name="Sugawara M."/>
            <person name="Takahashi M."/>
            <person name="Kanda K."/>
            <person name="Yokoi T."/>
            <person name="Furuya T."/>
            <person name="Kikkawa E."/>
            <person name="Omura Y."/>
            <person name="Abe K."/>
            <person name="Kamihara K."/>
            <person name="Katsuta N."/>
            <person name="Sato K."/>
            <person name="Tanikawa M."/>
            <person name="Yamazaki M."/>
            <person name="Ninomiya K."/>
            <person name="Ishibashi T."/>
            <person name="Yamashita H."/>
            <person name="Murakawa K."/>
            <person name="Fujimori K."/>
            <person name="Tanai H."/>
            <person name="Kimata M."/>
            <person name="Watanabe M."/>
            <person name="Hiraoka S."/>
            <person name="Chiba Y."/>
            <person name="Ishida S."/>
            <person name="Ono Y."/>
            <person name="Takiguchi S."/>
            <person name="Watanabe S."/>
            <person name="Yosida M."/>
            <person name="Hotuta T."/>
            <person name="Kusano J."/>
            <person name="Kanehori K."/>
            <person name="Takahashi-Fujii A."/>
            <person name="Hara H."/>
            <person name="Tanase T.-O."/>
            <person name="Nomura Y."/>
            <person name="Togiya S."/>
            <person name="Komai F."/>
            <person name="Hara R."/>
            <person name="Takeuchi K."/>
            <person name="Arita M."/>
            <person name="Imose N."/>
            <person name="Musashino K."/>
            <person name="Yuuki H."/>
            <person name="Oshima A."/>
            <person name="Sasaki N."/>
            <person name="Aotsuka S."/>
            <person name="Yoshikawa Y."/>
            <person name="Matsunawa H."/>
            <person name="Ichihara T."/>
            <person name="Shiohata N."/>
            <person name="Sano S."/>
            <person name="Moriya S."/>
            <person name="Momiyama H."/>
            <person name="Satoh N."/>
            <person name="Takami S."/>
            <person name="Terashima Y."/>
            <person name="Suzuki O."/>
            <person name="Nakagawa S."/>
            <person name="Senoh A."/>
            <person name="Mizoguchi H."/>
            <person name="Goto Y."/>
            <person name="Shimizu F."/>
            <person name="Wakebe H."/>
            <person name="Hishigaki H."/>
            <person name="Watanabe T."/>
            <person name="Sugiyama A."/>
            <person name="Takemoto M."/>
            <person name="Kawakami B."/>
            <person name="Yamazaki M."/>
            <person name="Watanabe K."/>
            <person name="Kumagai A."/>
            <person name="Itakura S."/>
            <person name="Fukuzumi Y."/>
            <person name="Fujimori Y."/>
            <person name="Komiyama M."/>
            <person name="Tashiro H."/>
            <person name="Tanigami A."/>
            <person name="Fujiwara T."/>
            <person name="Ono T."/>
            <person name="Yamada K."/>
            <person name="Fujii Y."/>
            <person name="Ozaki K."/>
            <person name="Hirao M."/>
            <person name="Ohmori Y."/>
            <person name="Kawabata A."/>
            <person name="Hikiji T."/>
            <person name="Kobatake N."/>
            <person name="Inagaki H."/>
            <person name="Ikema Y."/>
            <person name="Okamoto S."/>
            <person name="Okitani R."/>
            <person name="Kawakami T."/>
            <person name="Noguchi S."/>
            <person name="Itoh T."/>
            <person name="Shigeta K."/>
            <person name="Senba T."/>
            <person name="Matsumura K."/>
            <person name="Nakajima Y."/>
            <person name="Mizuno T."/>
            <person name="Morinaga M."/>
            <person name="Sasaki M."/>
            <person name="Togashi T."/>
            <person name="Oyama M."/>
            <person name="Hata H."/>
            <person name="Watanabe M."/>
            <person name="Komatsu T."/>
            <person name="Mizushima-Sugano J."/>
            <person name="Satoh T."/>
            <person name="Shirai Y."/>
            <person name="Takahashi Y."/>
            <person name="Nakagawa K."/>
            <person name="Okumura K."/>
            <person name="Nagase T."/>
            <person name="Nomura N."/>
            <person name="Kikuchi H."/>
            <person name="Masuho Y."/>
            <person name="Yamashita R."/>
            <person name="Nakai K."/>
            <person name="Yada T."/>
            <person name="Nakamura Y."/>
            <person name="Ohara O."/>
            <person name="Isogai T."/>
            <person name="Sugano S."/>
        </authorList>
    </citation>
    <scope>NUCLEOTIDE SEQUENCE [LARGE SCALE MRNA]</scope>
    <source>
        <tissue>Brain</tissue>
    </source>
</reference>
<reference key="4">
    <citation type="journal article" date="2006" name="Nature">
        <title>The DNA sequence, annotation and analysis of human chromosome 3.</title>
        <authorList>
            <person name="Muzny D.M."/>
            <person name="Scherer S.E."/>
            <person name="Kaul R."/>
            <person name="Wang J."/>
            <person name="Yu J."/>
            <person name="Sudbrak R."/>
            <person name="Buhay C.J."/>
            <person name="Chen R."/>
            <person name="Cree A."/>
            <person name="Ding Y."/>
            <person name="Dugan-Rocha S."/>
            <person name="Gill R."/>
            <person name="Gunaratne P."/>
            <person name="Harris R.A."/>
            <person name="Hawes A.C."/>
            <person name="Hernandez J."/>
            <person name="Hodgson A.V."/>
            <person name="Hume J."/>
            <person name="Jackson A."/>
            <person name="Khan Z.M."/>
            <person name="Kovar-Smith C."/>
            <person name="Lewis L.R."/>
            <person name="Lozado R.J."/>
            <person name="Metzker M.L."/>
            <person name="Milosavljevic A."/>
            <person name="Miner G.R."/>
            <person name="Morgan M.B."/>
            <person name="Nazareth L.V."/>
            <person name="Scott G."/>
            <person name="Sodergren E."/>
            <person name="Song X.-Z."/>
            <person name="Steffen D."/>
            <person name="Wei S."/>
            <person name="Wheeler D.A."/>
            <person name="Wright M.W."/>
            <person name="Worley K.C."/>
            <person name="Yuan Y."/>
            <person name="Zhang Z."/>
            <person name="Adams C.Q."/>
            <person name="Ansari-Lari M.A."/>
            <person name="Ayele M."/>
            <person name="Brown M.J."/>
            <person name="Chen G."/>
            <person name="Chen Z."/>
            <person name="Clendenning J."/>
            <person name="Clerc-Blankenburg K.P."/>
            <person name="Chen R."/>
            <person name="Chen Z."/>
            <person name="Davis C."/>
            <person name="Delgado O."/>
            <person name="Dinh H.H."/>
            <person name="Dong W."/>
            <person name="Draper H."/>
            <person name="Ernst S."/>
            <person name="Fu G."/>
            <person name="Gonzalez-Garay M.L."/>
            <person name="Garcia D.K."/>
            <person name="Gillett W."/>
            <person name="Gu J."/>
            <person name="Hao B."/>
            <person name="Haugen E."/>
            <person name="Havlak P."/>
            <person name="He X."/>
            <person name="Hennig S."/>
            <person name="Hu S."/>
            <person name="Huang W."/>
            <person name="Jackson L.R."/>
            <person name="Jacob L.S."/>
            <person name="Kelly S.H."/>
            <person name="Kube M."/>
            <person name="Levy R."/>
            <person name="Li Z."/>
            <person name="Liu B."/>
            <person name="Liu J."/>
            <person name="Liu W."/>
            <person name="Lu J."/>
            <person name="Maheshwari M."/>
            <person name="Nguyen B.-V."/>
            <person name="Okwuonu G.O."/>
            <person name="Palmeiri A."/>
            <person name="Pasternak S."/>
            <person name="Perez L.M."/>
            <person name="Phelps K.A."/>
            <person name="Plopper F.J."/>
            <person name="Qiang B."/>
            <person name="Raymond C."/>
            <person name="Rodriguez R."/>
            <person name="Saenphimmachak C."/>
            <person name="Santibanez J."/>
            <person name="Shen H."/>
            <person name="Shen Y."/>
            <person name="Subramanian S."/>
            <person name="Tabor P.E."/>
            <person name="Verduzco D."/>
            <person name="Waldron L."/>
            <person name="Wang J."/>
            <person name="Wang J."/>
            <person name="Wang Q."/>
            <person name="Williams G.A."/>
            <person name="Wong G.K.-S."/>
            <person name="Yao Z."/>
            <person name="Zhang J."/>
            <person name="Zhang X."/>
            <person name="Zhao G."/>
            <person name="Zhou J."/>
            <person name="Zhou Y."/>
            <person name="Nelson D."/>
            <person name="Lehrach H."/>
            <person name="Reinhardt R."/>
            <person name="Naylor S.L."/>
            <person name="Yang H."/>
            <person name="Olson M."/>
            <person name="Weinstock G."/>
            <person name="Gibbs R.A."/>
        </authorList>
    </citation>
    <scope>NUCLEOTIDE SEQUENCE [LARGE SCALE GENOMIC DNA]</scope>
</reference>
<reference key="5">
    <citation type="submission" date="2005-09" db="EMBL/GenBank/DDBJ databases">
        <authorList>
            <person name="Mural R.J."/>
            <person name="Istrail S."/>
            <person name="Sutton G.G."/>
            <person name="Florea L."/>
            <person name="Halpern A.L."/>
            <person name="Mobarry C.M."/>
            <person name="Lippert R."/>
            <person name="Walenz B."/>
            <person name="Shatkay H."/>
            <person name="Dew I."/>
            <person name="Miller J.R."/>
            <person name="Flanigan M.J."/>
            <person name="Edwards N.J."/>
            <person name="Bolanos R."/>
            <person name="Fasulo D."/>
            <person name="Halldorsson B.V."/>
            <person name="Hannenhalli S."/>
            <person name="Turner R."/>
            <person name="Yooseph S."/>
            <person name="Lu F."/>
            <person name="Nusskern D.R."/>
            <person name="Shue B.C."/>
            <person name="Zheng X.H."/>
            <person name="Zhong F."/>
            <person name="Delcher A.L."/>
            <person name="Huson D.H."/>
            <person name="Kravitz S.A."/>
            <person name="Mouchard L."/>
            <person name="Reinert K."/>
            <person name="Remington K.A."/>
            <person name="Clark A.G."/>
            <person name="Waterman M.S."/>
            <person name="Eichler E.E."/>
            <person name="Adams M.D."/>
            <person name="Hunkapiller M.W."/>
            <person name="Myers E.W."/>
            <person name="Venter J.C."/>
        </authorList>
    </citation>
    <scope>NUCLEOTIDE SEQUENCE [LARGE SCALE GENOMIC DNA]</scope>
</reference>
<reference key="6">
    <citation type="journal article" date="2004" name="Genome Res.">
        <title>The status, quality, and expansion of the NIH full-length cDNA project: the Mammalian Gene Collection (MGC).</title>
        <authorList>
            <consortium name="The MGC Project Team"/>
        </authorList>
    </citation>
    <scope>NUCLEOTIDE SEQUENCE [LARGE SCALE MRNA]</scope>
</reference>
<reference key="7">
    <citation type="journal article" date="2007" name="Gene">
        <title>FBXO40, a gene encoding a novel muscle-specific F-box protein, is upregulated in denervation-related muscle atrophy.</title>
        <authorList>
            <person name="Ye J."/>
            <person name="Zhang Y."/>
            <person name="Xu J."/>
            <person name="Zhang Q."/>
            <person name="Zhu D."/>
        </authorList>
    </citation>
    <scope>TISSUE SPECIFICITY</scope>
</reference>
<gene>
    <name type="primary">FBXO40</name>
    <name type="synonym">FBX40</name>
    <name type="synonym">KIAA1195</name>
</gene>
<accession>Q9UH90</accession>
<accession>B2RAX7</accession>
<accession>Q32M70</accession>
<accession>Q9ULM5</accession>
<proteinExistence type="evidence at protein level"/>
<name>FBX40_HUMAN</name>